<gene>
    <name evidence="1" type="primary">IVa2</name>
</gene>
<organism>
    <name type="scientific">Fowl adenovirus A serotype 1 (strain CELO / Phelps)</name>
    <name type="common">FAdV-1</name>
    <name type="synonym">Avian adenovirus gal1 (strain Phelps)</name>
    <dbReference type="NCBI Taxonomy" id="10553"/>
    <lineage>
        <taxon>Viruses</taxon>
        <taxon>Varidnaviria</taxon>
        <taxon>Bamfordvirae</taxon>
        <taxon>Preplasmiviricota</taxon>
        <taxon>Tectiliviricetes</taxon>
        <taxon>Rowavirales</taxon>
        <taxon>Adenoviridae</taxon>
        <taxon>Aviadenovirus</taxon>
        <taxon>Fowl aviadenovirus A</taxon>
    </lineage>
</organism>
<feature type="chain" id="PRO_0000221891" description="Packaging protein 1">
    <location>
        <begin position="1"/>
        <end position="439"/>
    </location>
</feature>
<feature type="region of interest" description="Disordered" evidence="2">
    <location>
        <begin position="1"/>
        <end position="42"/>
    </location>
</feature>
<feature type="region of interest" description="DNA-binding" evidence="1">
    <location>
        <begin position="419"/>
        <end position="439"/>
    </location>
</feature>
<feature type="compositionally biased region" description="Polar residues" evidence="2">
    <location>
        <begin position="1"/>
        <end position="23"/>
    </location>
</feature>
<feature type="binding site" evidence="1">
    <location>
        <begin position="151"/>
        <end position="158"/>
    </location>
    <ligand>
        <name>ATP</name>
        <dbReference type="ChEBI" id="CHEBI:30616"/>
    </ligand>
</feature>
<protein>
    <recommendedName>
        <fullName evidence="1">Packaging protein 1</fullName>
    </recommendedName>
    <alternativeName>
        <fullName evidence="1">Packaging protein IVa2</fullName>
    </alternativeName>
</protein>
<comment type="function">
    <text evidence="1">Component of the packaging machinery which encapsidates the viral DNA into preformed capsids and transcriptional activator of the viral major late promoter (MLP). Binds, along with packaging proteins 2 and 3, to the specific packaging sequence on the left end of viral genomic DNA and displays ATPase activity thereby providing the power stroke of the packaging machinery. The activity of packaging protein IVa2 is stimulated by protein 33K which acts as a terminase. May be the protein that pumps DNA into the capsid powered by ATP hydrolysis. Specifically binds to the 5'-CG-3' nucleotides of the repeats making up the packaging sequence. Component of the DEF-A and DEF-B transcription factors that bind downstream elements of the major late promoter (MLP), and stimulate transcription from the MLP after initiation of viral DNA replication. DEF-A is a heterodimer packaging proteins 1 and 2 and DEF-B is a homodimer of packaging protein 1.</text>
</comment>
<comment type="subunit">
    <text evidence="1">Homodimer. Part of a genome packaging complex composed of packaging proteins 1, 2 and 3; this complex specifically binds to the packaging sequence on the left end of viral genomic DNA and performs packaging of the viral genome. Interacts with protein 33K.</text>
</comment>
<comment type="subcellular location">
    <subcellularLocation>
        <location evidence="1">Virion</location>
    </subcellularLocation>
    <subcellularLocation>
        <location evidence="1">Host nucleus</location>
        <location evidence="1">Host nucleoplasm</location>
    </subcellularLocation>
    <subcellularLocation>
        <location evidence="1">Host nucleus</location>
        <location evidence="1">Host nucleolus</location>
    </subcellularLocation>
    <text evidence="1">Located at a unique vertex of the capsid. Present in about 6-8 copies per virion.</text>
</comment>
<comment type="induction">
    <text evidence="1">Expressed in the intermediate phase of the viral replicative cycle.</text>
</comment>
<comment type="similarity">
    <text evidence="1">Belongs to the adenoviridae packaging protein 1 family.</text>
</comment>
<proteinExistence type="inferred from homology"/>
<sequence length="439" mass="50369">MSTQIPARQETYDPSQSSGTKTPSHPYDGNPTRSYPKRNAGKFTTYSSQMIAPRKRKAWEYEEEEYEASRDFYQRVTSWYDGAVDLAPQLFREQHFPSYDEFYSLGGVNEKFLEAHEEVKAQEQMDSRYLQHGQLPSINMGKQPIIGVIYGPTGSGKSHLLRALISCNMLDPIPETVIFITPEKNMIPPIEQTSWNLQLVEANFDCREDGTIAPKTSTFRPEFMEMTYEEATAPEHLNIDHPDNIYVKVSKRGPVAIIMDECMDKLCSGSSVSVLFHALPSKLFARSAHCTAFYIFVVLHNMAPRTAIGNVPTLKVNAKMHILSCHIPQFQFARFLYAFAHNISKDLVVLLKAYFSFLQQNQRFSWVMYTPDPVSESFRWCSIDQQYSIIPLNVNIQERFLKTAKSIIKFSETHRKQLERNPKLTDLEKLSPPGTFQET</sequence>
<organismHost>
    <name type="scientific">Galliformes</name>
    <dbReference type="NCBI Taxonomy" id="8976"/>
</organismHost>
<reference key="1">
    <citation type="journal article" date="1996" name="J. Virol.">
        <title>The complete DNA sequence and genomic organization of the avian adenovirus CELO.</title>
        <authorList>
            <person name="Chiocca S."/>
            <person name="Kurzbauer R."/>
            <person name="Schaffner G."/>
            <person name="Baker A."/>
            <person name="Mautner V."/>
            <person name="Cotten M."/>
        </authorList>
    </citation>
    <scope>NUCLEOTIDE SEQUENCE [LARGE SCALE GENOMIC DNA]</scope>
</reference>
<name>PKG1_ADEG1</name>
<evidence type="ECO:0000255" key="1">
    <source>
        <dbReference type="HAMAP-Rule" id="MF_04057"/>
    </source>
</evidence>
<evidence type="ECO:0000256" key="2">
    <source>
        <dbReference type="SAM" id="MobiDB-lite"/>
    </source>
</evidence>
<dbReference type="EMBL" id="U46933">
    <property type="protein sequence ID" value="AAC54902.1"/>
    <property type="molecule type" value="Genomic_DNA"/>
</dbReference>
<dbReference type="RefSeq" id="NP_043876.1">
    <property type="nucleotide sequence ID" value="NC_001720.1"/>
</dbReference>
<dbReference type="KEGG" id="vg:1733456"/>
<dbReference type="Proteomes" id="UP000001594">
    <property type="component" value="Segment"/>
</dbReference>
<dbReference type="GO" id="GO:0044196">
    <property type="term" value="C:host cell nucleolus"/>
    <property type="evidence" value="ECO:0007669"/>
    <property type="project" value="UniProtKB-SubCell"/>
</dbReference>
<dbReference type="GO" id="GO:0044095">
    <property type="term" value="C:host cell nucleoplasm"/>
    <property type="evidence" value="ECO:0007669"/>
    <property type="project" value="UniProtKB-SubCell"/>
</dbReference>
<dbReference type="GO" id="GO:0044423">
    <property type="term" value="C:virion component"/>
    <property type="evidence" value="ECO:0007669"/>
    <property type="project" value="UniProtKB-UniRule"/>
</dbReference>
<dbReference type="GO" id="GO:0005524">
    <property type="term" value="F:ATP binding"/>
    <property type="evidence" value="ECO:0007669"/>
    <property type="project" value="UniProtKB-UniRule"/>
</dbReference>
<dbReference type="GO" id="GO:0003677">
    <property type="term" value="F:DNA binding"/>
    <property type="evidence" value="ECO:0007669"/>
    <property type="project" value="UniProtKB-UniRule"/>
</dbReference>
<dbReference type="GO" id="GO:0006351">
    <property type="term" value="P:DNA-templated transcription"/>
    <property type="evidence" value="ECO:0007669"/>
    <property type="project" value="UniProtKB-UniRule"/>
</dbReference>
<dbReference type="GO" id="GO:0039708">
    <property type="term" value="P:nuclear capsid assembly"/>
    <property type="evidence" value="ECO:0007669"/>
    <property type="project" value="UniProtKB-UniRule"/>
</dbReference>
<dbReference type="GO" id="GO:0006355">
    <property type="term" value="P:regulation of DNA-templated transcription"/>
    <property type="evidence" value="ECO:0007669"/>
    <property type="project" value="UniProtKB-UniRule"/>
</dbReference>
<dbReference type="GO" id="GO:0098035">
    <property type="term" value="P:viral DNA genome packaging via site-specific sequence recognition"/>
    <property type="evidence" value="ECO:0007669"/>
    <property type="project" value="UniProtKB-UniRule"/>
</dbReference>
<dbReference type="GO" id="GO:0019076">
    <property type="term" value="P:viral release from host cell"/>
    <property type="evidence" value="ECO:0007669"/>
    <property type="project" value="UniProtKB-UniRule"/>
</dbReference>
<dbReference type="GO" id="GO:0019083">
    <property type="term" value="P:viral transcription"/>
    <property type="evidence" value="ECO:0007669"/>
    <property type="project" value="UniProtKB-UniRule"/>
</dbReference>
<dbReference type="HAMAP" id="MF_04057">
    <property type="entry name" value="ADV_PKG1"/>
    <property type="match status" value="1"/>
</dbReference>
<dbReference type="InterPro" id="IPR003389">
    <property type="entry name" value="Adeno_IVa2"/>
</dbReference>
<dbReference type="InterPro" id="IPR027417">
    <property type="entry name" value="P-loop_NTPase"/>
</dbReference>
<dbReference type="Pfam" id="PF02456">
    <property type="entry name" value="Adeno_IVa2"/>
    <property type="match status" value="1"/>
</dbReference>
<dbReference type="SUPFAM" id="SSF52540">
    <property type="entry name" value="P-loop containing nucleoside triphosphate hydrolases"/>
    <property type="match status" value="2"/>
</dbReference>
<accession>Q64749</accession>
<keyword id="KW-0010">Activator</keyword>
<keyword id="KW-0067">ATP-binding</keyword>
<keyword id="KW-0238">DNA-binding</keyword>
<keyword id="KW-1048">Host nucleus</keyword>
<keyword id="KW-0547">Nucleotide-binding</keyword>
<keyword id="KW-0597">Phosphoprotein</keyword>
<keyword id="KW-1185">Reference proteome</keyword>
<keyword id="KW-0804">Transcription</keyword>
<keyword id="KW-0805">Transcription regulation</keyword>
<keyword id="KW-0231">Viral genome packaging</keyword>
<keyword id="KW-1188">Viral release from host cell</keyword>
<keyword id="KW-0946">Virion</keyword>